<keyword id="KW-0687">Ribonucleoprotein</keyword>
<keyword id="KW-0689">Ribosomal protein</keyword>
<reference key="1">
    <citation type="journal article" date="2006" name="PLoS Genet.">
        <title>Who ate whom? Adaptive Helicobacter genomic changes that accompanied a host jump from early humans to large felines.</title>
        <authorList>
            <person name="Eppinger M."/>
            <person name="Baar C."/>
            <person name="Linz B."/>
            <person name="Raddatz G."/>
            <person name="Lanz C."/>
            <person name="Keller H."/>
            <person name="Morelli G."/>
            <person name="Gressmann H."/>
            <person name="Achtman M."/>
            <person name="Schuster S.C."/>
        </authorList>
    </citation>
    <scope>NUCLEOTIDE SEQUENCE [LARGE SCALE GENOMIC DNA]</scope>
    <source>
        <strain>Sheeba</strain>
    </source>
</reference>
<proteinExistence type="inferred from homology"/>
<organism>
    <name type="scientific">Helicobacter acinonychis (strain Sheeba)</name>
    <dbReference type="NCBI Taxonomy" id="382638"/>
    <lineage>
        <taxon>Bacteria</taxon>
        <taxon>Pseudomonadati</taxon>
        <taxon>Campylobacterota</taxon>
        <taxon>Epsilonproteobacteria</taxon>
        <taxon>Campylobacterales</taxon>
        <taxon>Helicobacteraceae</taxon>
        <taxon>Helicobacter</taxon>
    </lineage>
</organism>
<gene>
    <name evidence="1" type="primary">rpsJ</name>
    <name type="ordered locus">Hac_0135</name>
</gene>
<feature type="chain" id="PRO_1000015033" description="Small ribosomal subunit protein uS10">
    <location>
        <begin position="1"/>
        <end position="104"/>
    </location>
</feature>
<name>RS10_HELAH</name>
<accession>Q17ZD9</accession>
<protein>
    <recommendedName>
        <fullName evidence="1">Small ribosomal subunit protein uS10</fullName>
    </recommendedName>
    <alternativeName>
        <fullName evidence="2">30S ribosomal protein S10</fullName>
    </alternativeName>
</protein>
<comment type="function">
    <text evidence="1">Involved in the binding of tRNA to the ribosomes.</text>
</comment>
<comment type="subunit">
    <text evidence="1">Part of the 30S ribosomal subunit.</text>
</comment>
<comment type="similarity">
    <text evidence="1">Belongs to the universal ribosomal protein uS10 family.</text>
</comment>
<evidence type="ECO:0000255" key="1">
    <source>
        <dbReference type="HAMAP-Rule" id="MF_00508"/>
    </source>
</evidence>
<evidence type="ECO:0000305" key="2"/>
<sequence>MEKIRLKLKAYDHRVLDRSVVAIVEAVKRSGSEIRGPIPLPTKNKRYTVLRSPHVNKDSREQFEIRVYSRLIDIISATPETVDSLMKLDLAPEVDVEVTSMETK</sequence>
<dbReference type="EMBL" id="AM260522">
    <property type="protein sequence ID" value="CAJ98987.1"/>
    <property type="molecule type" value="Genomic_DNA"/>
</dbReference>
<dbReference type="RefSeq" id="WP_000411561.1">
    <property type="nucleotide sequence ID" value="NC_008229.1"/>
</dbReference>
<dbReference type="SMR" id="Q17ZD9"/>
<dbReference type="STRING" id="382638.Hac_0135"/>
<dbReference type="GeneID" id="93237549"/>
<dbReference type="KEGG" id="hac:Hac_0135"/>
<dbReference type="eggNOG" id="COG0051">
    <property type="taxonomic scope" value="Bacteria"/>
</dbReference>
<dbReference type="HOGENOM" id="CLU_122625_1_3_7"/>
<dbReference type="OrthoDB" id="9804464at2"/>
<dbReference type="BioCyc" id="HACI382638:HAC_RS00575-MONOMER"/>
<dbReference type="Proteomes" id="UP000000775">
    <property type="component" value="Chromosome"/>
</dbReference>
<dbReference type="GO" id="GO:1990904">
    <property type="term" value="C:ribonucleoprotein complex"/>
    <property type="evidence" value="ECO:0007669"/>
    <property type="project" value="UniProtKB-KW"/>
</dbReference>
<dbReference type="GO" id="GO:0005840">
    <property type="term" value="C:ribosome"/>
    <property type="evidence" value="ECO:0007669"/>
    <property type="project" value="UniProtKB-KW"/>
</dbReference>
<dbReference type="GO" id="GO:0003735">
    <property type="term" value="F:structural constituent of ribosome"/>
    <property type="evidence" value="ECO:0007669"/>
    <property type="project" value="InterPro"/>
</dbReference>
<dbReference type="GO" id="GO:0000049">
    <property type="term" value="F:tRNA binding"/>
    <property type="evidence" value="ECO:0007669"/>
    <property type="project" value="UniProtKB-UniRule"/>
</dbReference>
<dbReference type="GO" id="GO:0006412">
    <property type="term" value="P:translation"/>
    <property type="evidence" value="ECO:0007669"/>
    <property type="project" value="UniProtKB-UniRule"/>
</dbReference>
<dbReference type="FunFam" id="3.30.70.600:FF:000003">
    <property type="entry name" value="30S ribosomal protein S10"/>
    <property type="match status" value="1"/>
</dbReference>
<dbReference type="Gene3D" id="3.30.70.600">
    <property type="entry name" value="Ribosomal protein S10 domain"/>
    <property type="match status" value="1"/>
</dbReference>
<dbReference type="HAMAP" id="MF_00508">
    <property type="entry name" value="Ribosomal_uS10"/>
    <property type="match status" value="1"/>
</dbReference>
<dbReference type="InterPro" id="IPR001848">
    <property type="entry name" value="Ribosomal_uS10"/>
</dbReference>
<dbReference type="InterPro" id="IPR018268">
    <property type="entry name" value="Ribosomal_uS10_CS"/>
</dbReference>
<dbReference type="InterPro" id="IPR027486">
    <property type="entry name" value="Ribosomal_uS10_dom"/>
</dbReference>
<dbReference type="InterPro" id="IPR036838">
    <property type="entry name" value="Ribosomal_uS10_dom_sf"/>
</dbReference>
<dbReference type="NCBIfam" id="NF001861">
    <property type="entry name" value="PRK00596.1"/>
    <property type="match status" value="1"/>
</dbReference>
<dbReference type="NCBIfam" id="TIGR01049">
    <property type="entry name" value="rpsJ_bact"/>
    <property type="match status" value="1"/>
</dbReference>
<dbReference type="PANTHER" id="PTHR11700">
    <property type="entry name" value="30S RIBOSOMAL PROTEIN S10 FAMILY MEMBER"/>
    <property type="match status" value="1"/>
</dbReference>
<dbReference type="Pfam" id="PF00338">
    <property type="entry name" value="Ribosomal_S10"/>
    <property type="match status" value="1"/>
</dbReference>
<dbReference type="PRINTS" id="PR00971">
    <property type="entry name" value="RIBOSOMALS10"/>
</dbReference>
<dbReference type="SMART" id="SM01403">
    <property type="entry name" value="Ribosomal_S10"/>
    <property type="match status" value="1"/>
</dbReference>
<dbReference type="SUPFAM" id="SSF54999">
    <property type="entry name" value="Ribosomal protein S10"/>
    <property type="match status" value="1"/>
</dbReference>
<dbReference type="PROSITE" id="PS00361">
    <property type="entry name" value="RIBOSOMAL_S10"/>
    <property type="match status" value="1"/>
</dbReference>